<sequence length="513" mass="57235">MGIGTLLLFTFLGLVAGATAVWLITRTLLKQRTEGILAEARREAEVIKQKKLLEVKEKFLQLKGDLEKQVAQRNSKLQSVESKLKSREQTLNQRQEDITKKGQEMDLMRENLTAQLSVIEKKKTELDELKTREQAHLESLSGLSAAEAKDRLVESLKDEAKGQASAYVNEIIEEAKMTANKEAKRIVIQSIQRVATETAIENSVTVFHIESDEIKGRIIGREGRNIRALEAAAGIEIIVDDTPEAIVLSGFDPVRREIARLALHQLVQDGRIHPARIEEVVSKVRKQVEEEIIETGKRTVIDLGIHGLHPELIRLIGKMKYRSSYGQNLLQHSRETANLCAIMASELGLNPKKAKRAGLLHDIGKVPDDEPELPHALLGMKLCEKFKEKPDICNAVGAHHDEVEMMSLIAPIVQVCDAISGARPGARREIVEAYIKRLNDLEQLAMSYPGVIKTYAIQAGRELRVIVGADKTDDASVETLSNEIAKRIQDEMTYPGQVKITVIRESRSVSYAK</sequence>
<organism>
    <name type="scientific">Porphyromonas gingivalis (strain ATCC BAA-308 / W83)</name>
    <dbReference type="NCBI Taxonomy" id="242619"/>
    <lineage>
        <taxon>Bacteria</taxon>
        <taxon>Pseudomonadati</taxon>
        <taxon>Bacteroidota</taxon>
        <taxon>Bacteroidia</taxon>
        <taxon>Bacteroidales</taxon>
        <taxon>Porphyromonadaceae</taxon>
        <taxon>Porphyromonas</taxon>
    </lineage>
</organism>
<gene>
    <name evidence="1" type="primary">rny</name>
    <name type="ordered locus">PG_0401</name>
</gene>
<accession>Q7MX21</accession>
<reference key="1">
    <citation type="journal article" date="2003" name="J. Bacteriol.">
        <title>Complete genome sequence of the oral pathogenic bacterium Porphyromonas gingivalis strain W83.</title>
        <authorList>
            <person name="Nelson K.E."/>
            <person name="Fleischmann R.D."/>
            <person name="DeBoy R.T."/>
            <person name="Paulsen I.T."/>
            <person name="Fouts D.E."/>
            <person name="Eisen J.A."/>
            <person name="Daugherty S.C."/>
            <person name="Dodson R.J."/>
            <person name="Durkin A.S."/>
            <person name="Gwinn M.L."/>
            <person name="Haft D.H."/>
            <person name="Kolonay J.F."/>
            <person name="Nelson W.C."/>
            <person name="Mason T.M."/>
            <person name="Tallon L."/>
            <person name="Gray J."/>
            <person name="Granger D."/>
            <person name="Tettelin H."/>
            <person name="Dong H."/>
            <person name="Galvin J.L."/>
            <person name="Duncan M.J."/>
            <person name="Dewhirst F.E."/>
            <person name="Fraser C.M."/>
        </authorList>
    </citation>
    <scope>NUCLEOTIDE SEQUENCE [LARGE SCALE GENOMIC DNA]</scope>
    <source>
        <strain>ATCC BAA-308 / W83</strain>
    </source>
</reference>
<protein>
    <recommendedName>
        <fullName evidence="1">Ribonuclease Y</fullName>
        <shortName evidence="1">RNase Y</shortName>
        <ecNumber evidence="1">3.1.-.-</ecNumber>
    </recommendedName>
</protein>
<proteinExistence type="inferred from homology"/>
<name>RNY_PORGI</name>
<feature type="chain" id="PRO_0000344923" description="Ribonuclease Y">
    <location>
        <begin position="1"/>
        <end position="513"/>
    </location>
</feature>
<feature type="transmembrane region" description="Helical" evidence="1">
    <location>
        <begin position="3"/>
        <end position="23"/>
    </location>
</feature>
<feature type="domain" description="KH" evidence="1">
    <location>
        <begin position="203"/>
        <end position="263"/>
    </location>
</feature>
<feature type="domain" description="HD" evidence="2">
    <location>
        <begin position="329"/>
        <end position="422"/>
    </location>
</feature>
<feature type="region of interest" description="Disordered" evidence="3">
    <location>
        <begin position="77"/>
        <end position="96"/>
    </location>
</feature>
<feature type="compositionally biased region" description="Basic and acidic residues" evidence="3">
    <location>
        <begin position="82"/>
        <end position="96"/>
    </location>
</feature>
<evidence type="ECO:0000255" key="1">
    <source>
        <dbReference type="HAMAP-Rule" id="MF_00335"/>
    </source>
</evidence>
<evidence type="ECO:0000255" key="2">
    <source>
        <dbReference type="PROSITE-ProRule" id="PRU01175"/>
    </source>
</evidence>
<evidence type="ECO:0000256" key="3">
    <source>
        <dbReference type="SAM" id="MobiDB-lite"/>
    </source>
</evidence>
<keyword id="KW-1003">Cell membrane</keyword>
<keyword id="KW-0255">Endonuclease</keyword>
<keyword id="KW-0378">Hydrolase</keyword>
<keyword id="KW-0472">Membrane</keyword>
<keyword id="KW-0540">Nuclease</keyword>
<keyword id="KW-1185">Reference proteome</keyword>
<keyword id="KW-0694">RNA-binding</keyword>
<keyword id="KW-0812">Transmembrane</keyword>
<keyword id="KW-1133">Transmembrane helix</keyword>
<comment type="function">
    <text evidence="1">Endoribonuclease that initiates mRNA decay.</text>
</comment>
<comment type="subcellular location">
    <subcellularLocation>
        <location evidence="1">Cell membrane</location>
        <topology evidence="1">Single-pass membrane protein</topology>
    </subcellularLocation>
</comment>
<comment type="similarity">
    <text evidence="1">Belongs to the RNase Y family.</text>
</comment>
<dbReference type="EC" id="3.1.-.-" evidence="1"/>
<dbReference type="EMBL" id="AE015924">
    <property type="protein sequence ID" value="AAQ65606.1"/>
    <property type="molecule type" value="Genomic_DNA"/>
</dbReference>
<dbReference type="RefSeq" id="WP_004584929.1">
    <property type="nucleotide sequence ID" value="NC_002950.2"/>
</dbReference>
<dbReference type="SMR" id="Q7MX21"/>
<dbReference type="STRING" id="242619.PG_0401"/>
<dbReference type="DNASU" id="2551571"/>
<dbReference type="EnsemblBacteria" id="AAQ65606">
    <property type="protein sequence ID" value="AAQ65606"/>
    <property type="gene ID" value="PG_0401"/>
</dbReference>
<dbReference type="GeneID" id="29256738"/>
<dbReference type="KEGG" id="pgi:PG_0401"/>
<dbReference type="eggNOG" id="COG1418">
    <property type="taxonomic scope" value="Bacteria"/>
</dbReference>
<dbReference type="HOGENOM" id="CLU_028328_1_0_10"/>
<dbReference type="Proteomes" id="UP000000588">
    <property type="component" value="Chromosome"/>
</dbReference>
<dbReference type="GO" id="GO:0005886">
    <property type="term" value="C:plasma membrane"/>
    <property type="evidence" value="ECO:0007669"/>
    <property type="project" value="UniProtKB-SubCell"/>
</dbReference>
<dbReference type="GO" id="GO:0003723">
    <property type="term" value="F:RNA binding"/>
    <property type="evidence" value="ECO:0007669"/>
    <property type="project" value="UniProtKB-UniRule"/>
</dbReference>
<dbReference type="GO" id="GO:0004521">
    <property type="term" value="F:RNA endonuclease activity"/>
    <property type="evidence" value="ECO:0007669"/>
    <property type="project" value="UniProtKB-UniRule"/>
</dbReference>
<dbReference type="GO" id="GO:0006402">
    <property type="term" value="P:mRNA catabolic process"/>
    <property type="evidence" value="ECO:0007669"/>
    <property type="project" value="UniProtKB-UniRule"/>
</dbReference>
<dbReference type="CDD" id="cd00077">
    <property type="entry name" value="HDc"/>
    <property type="match status" value="1"/>
</dbReference>
<dbReference type="CDD" id="cd22431">
    <property type="entry name" value="KH-I_RNaseY"/>
    <property type="match status" value="1"/>
</dbReference>
<dbReference type="FunFam" id="1.10.3210.10:FF:000013">
    <property type="entry name" value="Ribonuclease Y"/>
    <property type="match status" value="1"/>
</dbReference>
<dbReference type="Gene3D" id="1.10.3210.10">
    <property type="entry name" value="Hypothetical protein af1432"/>
    <property type="match status" value="1"/>
</dbReference>
<dbReference type="Gene3D" id="3.30.1370.10">
    <property type="entry name" value="K Homology domain, type 1"/>
    <property type="match status" value="1"/>
</dbReference>
<dbReference type="HAMAP" id="MF_00335">
    <property type="entry name" value="RNase_Y"/>
    <property type="match status" value="1"/>
</dbReference>
<dbReference type="InterPro" id="IPR003607">
    <property type="entry name" value="HD/PDEase_dom"/>
</dbReference>
<dbReference type="InterPro" id="IPR006674">
    <property type="entry name" value="HD_domain"/>
</dbReference>
<dbReference type="InterPro" id="IPR006675">
    <property type="entry name" value="HDIG_dom"/>
</dbReference>
<dbReference type="InterPro" id="IPR004087">
    <property type="entry name" value="KH_dom"/>
</dbReference>
<dbReference type="InterPro" id="IPR004088">
    <property type="entry name" value="KH_dom_type_1"/>
</dbReference>
<dbReference type="InterPro" id="IPR036612">
    <property type="entry name" value="KH_dom_type_1_sf"/>
</dbReference>
<dbReference type="InterPro" id="IPR017705">
    <property type="entry name" value="Ribonuclease_Y"/>
</dbReference>
<dbReference type="InterPro" id="IPR022711">
    <property type="entry name" value="RNase_Y_N"/>
</dbReference>
<dbReference type="NCBIfam" id="TIGR00277">
    <property type="entry name" value="HDIG"/>
    <property type="match status" value="1"/>
</dbReference>
<dbReference type="NCBIfam" id="TIGR03319">
    <property type="entry name" value="RNase_Y"/>
    <property type="match status" value="1"/>
</dbReference>
<dbReference type="PANTHER" id="PTHR12826">
    <property type="entry name" value="RIBONUCLEASE Y"/>
    <property type="match status" value="1"/>
</dbReference>
<dbReference type="PANTHER" id="PTHR12826:SF15">
    <property type="entry name" value="RIBONUCLEASE Y"/>
    <property type="match status" value="1"/>
</dbReference>
<dbReference type="Pfam" id="PF01966">
    <property type="entry name" value="HD"/>
    <property type="match status" value="1"/>
</dbReference>
<dbReference type="Pfam" id="PF00013">
    <property type="entry name" value="KH_1"/>
    <property type="match status" value="1"/>
</dbReference>
<dbReference type="Pfam" id="PF12072">
    <property type="entry name" value="RNase_Y_N"/>
    <property type="match status" value="1"/>
</dbReference>
<dbReference type="SMART" id="SM00471">
    <property type="entry name" value="HDc"/>
    <property type="match status" value="1"/>
</dbReference>
<dbReference type="SMART" id="SM00322">
    <property type="entry name" value="KH"/>
    <property type="match status" value="1"/>
</dbReference>
<dbReference type="SUPFAM" id="SSF54791">
    <property type="entry name" value="Eukaryotic type KH-domain (KH-domain type I)"/>
    <property type="match status" value="1"/>
</dbReference>
<dbReference type="SUPFAM" id="SSF109604">
    <property type="entry name" value="HD-domain/PDEase-like"/>
    <property type="match status" value="1"/>
</dbReference>
<dbReference type="PROSITE" id="PS51831">
    <property type="entry name" value="HD"/>
    <property type="match status" value="1"/>
</dbReference>
<dbReference type="PROSITE" id="PS50084">
    <property type="entry name" value="KH_TYPE_1"/>
    <property type="match status" value="1"/>
</dbReference>